<feature type="chain" id="PRO_0000268603" description="Putative multidrug resistance protein MdtD">
    <location>
        <begin position="1"/>
        <end position="465"/>
    </location>
</feature>
<feature type="transmembrane region" description="Helical" evidence="1">
    <location>
        <begin position="12"/>
        <end position="32"/>
    </location>
</feature>
<feature type="transmembrane region" description="Helical" evidence="1">
    <location>
        <begin position="49"/>
        <end position="69"/>
    </location>
</feature>
<feature type="transmembrane region" description="Helical" evidence="1">
    <location>
        <begin position="72"/>
        <end position="92"/>
    </location>
</feature>
<feature type="transmembrane region" description="Helical" evidence="1">
    <location>
        <begin position="102"/>
        <end position="124"/>
    </location>
</feature>
<feature type="transmembrane region" description="Helical" evidence="1">
    <location>
        <begin position="138"/>
        <end position="158"/>
    </location>
</feature>
<feature type="transmembrane region" description="Helical" evidence="1">
    <location>
        <begin position="165"/>
        <end position="185"/>
    </location>
</feature>
<feature type="transmembrane region" description="Helical" evidence="1">
    <location>
        <begin position="195"/>
        <end position="215"/>
    </location>
</feature>
<feature type="transmembrane region" description="Helical" evidence="1">
    <location>
        <begin position="219"/>
        <end position="239"/>
    </location>
</feature>
<feature type="transmembrane region" description="Helical" evidence="1">
    <location>
        <begin position="267"/>
        <end position="287"/>
    </location>
</feature>
<feature type="transmembrane region" description="Helical" evidence="1">
    <location>
        <begin position="290"/>
        <end position="310"/>
    </location>
</feature>
<feature type="transmembrane region" description="Helical" evidence="1">
    <location>
        <begin position="342"/>
        <end position="362"/>
    </location>
</feature>
<feature type="transmembrane region" description="Helical" evidence="1">
    <location>
        <begin position="393"/>
        <end position="413"/>
    </location>
</feature>
<feature type="transmembrane region" description="Helical" evidence="1">
    <location>
        <begin position="430"/>
        <end position="450"/>
    </location>
</feature>
<gene>
    <name evidence="1" type="primary">mdtD</name>
    <name type="ordered locus">YPA_2289</name>
</gene>
<dbReference type="EMBL" id="CP000308">
    <property type="protein sequence ID" value="ABG14254.1"/>
    <property type="molecule type" value="Genomic_DNA"/>
</dbReference>
<dbReference type="RefSeq" id="WP_002209795.1">
    <property type="nucleotide sequence ID" value="NZ_CP009906.1"/>
</dbReference>
<dbReference type="SMR" id="Q1C5L8"/>
<dbReference type="KEGG" id="ypa:YPA_2289"/>
<dbReference type="Proteomes" id="UP000001971">
    <property type="component" value="Chromosome"/>
</dbReference>
<dbReference type="GO" id="GO:0005886">
    <property type="term" value="C:plasma membrane"/>
    <property type="evidence" value="ECO:0007669"/>
    <property type="project" value="UniProtKB-SubCell"/>
</dbReference>
<dbReference type="GO" id="GO:0022857">
    <property type="term" value="F:transmembrane transporter activity"/>
    <property type="evidence" value="ECO:0007669"/>
    <property type="project" value="UniProtKB-UniRule"/>
</dbReference>
<dbReference type="CDD" id="cd17503">
    <property type="entry name" value="MFS_LmrB_MDR_like"/>
    <property type="match status" value="1"/>
</dbReference>
<dbReference type="FunFam" id="1.20.1250.20:FF:000021">
    <property type="entry name" value="Putative multidrug resistance protein MdtD"/>
    <property type="match status" value="1"/>
</dbReference>
<dbReference type="FunFam" id="1.20.1720.10:FF:000001">
    <property type="entry name" value="Putative multidrug resistance protein MdtD"/>
    <property type="match status" value="1"/>
</dbReference>
<dbReference type="Gene3D" id="1.20.1250.20">
    <property type="entry name" value="MFS general substrate transporter like domains"/>
    <property type="match status" value="1"/>
</dbReference>
<dbReference type="Gene3D" id="1.20.1720.10">
    <property type="entry name" value="Multidrug resistance protein D"/>
    <property type="match status" value="1"/>
</dbReference>
<dbReference type="HAMAP" id="MF_01577">
    <property type="entry name" value="MFS_MdtD"/>
    <property type="match status" value="1"/>
</dbReference>
<dbReference type="InterPro" id="IPR004638">
    <property type="entry name" value="EmrB-like"/>
</dbReference>
<dbReference type="InterPro" id="IPR011701">
    <property type="entry name" value="MFS"/>
</dbReference>
<dbReference type="InterPro" id="IPR020846">
    <property type="entry name" value="MFS_dom"/>
</dbReference>
<dbReference type="InterPro" id="IPR036259">
    <property type="entry name" value="MFS_trans_sf"/>
</dbReference>
<dbReference type="InterPro" id="IPR023721">
    <property type="entry name" value="Multi-R_MdtD"/>
</dbReference>
<dbReference type="NCBIfam" id="TIGR00711">
    <property type="entry name" value="efflux_EmrB"/>
    <property type="match status" value="1"/>
</dbReference>
<dbReference type="NCBIfam" id="NF007799">
    <property type="entry name" value="PRK10504.1"/>
    <property type="match status" value="1"/>
</dbReference>
<dbReference type="PANTHER" id="PTHR42718:SF46">
    <property type="entry name" value="BLR6921 PROTEIN"/>
    <property type="match status" value="1"/>
</dbReference>
<dbReference type="PANTHER" id="PTHR42718">
    <property type="entry name" value="MAJOR FACILITATOR SUPERFAMILY MULTIDRUG TRANSPORTER MFSC"/>
    <property type="match status" value="1"/>
</dbReference>
<dbReference type="Pfam" id="PF07690">
    <property type="entry name" value="MFS_1"/>
    <property type="match status" value="1"/>
</dbReference>
<dbReference type="PRINTS" id="PR01036">
    <property type="entry name" value="TCRTETB"/>
</dbReference>
<dbReference type="SUPFAM" id="SSF103473">
    <property type="entry name" value="MFS general substrate transporter"/>
    <property type="match status" value="1"/>
</dbReference>
<dbReference type="PROSITE" id="PS50850">
    <property type="entry name" value="MFS"/>
    <property type="match status" value="1"/>
</dbReference>
<proteinExistence type="inferred from homology"/>
<organism>
    <name type="scientific">Yersinia pestis bv. Antiqua (strain Antiqua)</name>
    <dbReference type="NCBI Taxonomy" id="360102"/>
    <lineage>
        <taxon>Bacteria</taxon>
        <taxon>Pseudomonadati</taxon>
        <taxon>Pseudomonadota</taxon>
        <taxon>Gammaproteobacteria</taxon>
        <taxon>Enterobacterales</taxon>
        <taxon>Yersiniaceae</taxon>
        <taxon>Yersinia</taxon>
    </lineage>
</organism>
<protein>
    <recommendedName>
        <fullName evidence="1">Putative multidrug resistance protein MdtD</fullName>
    </recommendedName>
</protein>
<sequence length="465" mass="50176">MVTQATSVRWQLWIVAFGFFMQTLDTTIVNTALPSIAASLGENPLRMQSVIVSYVLTVAVMLPASGWLADRIGVKWVFFSAIILFTFGSLMCAQSATLNELILSRVLQGVGGAMMVPVGRLTVMKIVPREQYMAAMAFVTLPGQIGPLVGPALGGFLVEFASWHWIFLINLPVGVIGALATLLLMPNHKMSTRRFDISGFIMLAIGMATLTLALDGHTGLGLSPLAIAGLILCGVIALGSYWWHALGNRFALFSLHLFKNKIYTLGLVGSMSARIGSGMLPFMTPIFLQIGLGFSPFHAGLMMIPMIIGSMGMKRIIVQVVNRFGYRRVLVNATLLLAVVSLSLPLVAIMGWTLLMPVVLFFQGMLNALRFSTMNTLTLKTLPDRLASSGNSLLSMAMQLSMSIGVSTAGILLGTFAHHQVATNTPATHSAFLYSYLCMAIIIALPALIFNRVPPDTGANRHLAR</sequence>
<keyword id="KW-0997">Cell inner membrane</keyword>
<keyword id="KW-1003">Cell membrane</keyword>
<keyword id="KW-0472">Membrane</keyword>
<keyword id="KW-0812">Transmembrane</keyword>
<keyword id="KW-1133">Transmembrane helix</keyword>
<keyword id="KW-0813">Transport</keyword>
<reference key="1">
    <citation type="journal article" date="2006" name="J. Bacteriol.">
        <title>Complete genome sequence of Yersinia pestis strains Antiqua and Nepal516: evidence of gene reduction in an emerging pathogen.</title>
        <authorList>
            <person name="Chain P.S.G."/>
            <person name="Hu P."/>
            <person name="Malfatti S.A."/>
            <person name="Radnedge L."/>
            <person name="Larimer F."/>
            <person name="Vergez L.M."/>
            <person name="Worsham P."/>
            <person name="Chu M.C."/>
            <person name="Andersen G.L."/>
        </authorList>
    </citation>
    <scope>NUCLEOTIDE SEQUENCE [LARGE SCALE GENOMIC DNA]</scope>
    <source>
        <strain>Antiqua</strain>
    </source>
</reference>
<accession>Q1C5L8</accession>
<name>MDTD_YERPA</name>
<comment type="subcellular location">
    <subcellularLocation>
        <location evidence="1">Cell inner membrane</location>
        <topology evidence="1">Multi-pass membrane protein</topology>
    </subcellularLocation>
</comment>
<comment type="similarity">
    <text evidence="1">Belongs to the major facilitator superfamily. TCR/Tet family.</text>
</comment>
<evidence type="ECO:0000255" key="1">
    <source>
        <dbReference type="HAMAP-Rule" id="MF_01577"/>
    </source>
</evidence>